<evidence type="ECO:0000255" key="1"/>
<evidence type="ECO:0000255" key="2">
    <source>
        <dbReference type="PROSITE-ProRule" id="PRU00434"/>
    </source>
</evidence>
<evidence type="ECO:0000255" key="3">
    <source>
        <dbReference type="PROSITE-ProRule" id="PRU00441"/>
    </source>
</evidence>
<evidence type="ECO:0000305" key="4"/>
<feature type="chain" id="PRO_0000227931" description="ABC transporter B family member 18">
    <location>
        <begin position="1"/>
        <end position="1225"/>
    </location>
</feature>
<feature type="transmembrane region" description="Helical" evidence="3">
    <location>
        <begin position="23"/>
        <end position="43"/>
    </location>
</feature>
<feature type="transmembrane region" description="Helical" evidence="3">
    <location>
        <begin position="70"/>
        <end position="90"/>
    </location>
</feature>
<feature type="transmembrane region" description="Helical" evidence="3">
    <location>
        <begin position="146"/>
        <end position="168"/>
    </location>
</feature>
<feature type="transmembrane region" description="Helical" evidence="3">
    <location>
        <begin position="172"/>
        <end position="194"/>
    </location>
</feature>
<feature type="transmembrane region" description="Helical" evidence="3">
    <location>
        <begin position="252"/>
        <end position="272"/>
    </location>
</feature>
<feature type="transmembrane region" description="Helical" evidence="3">
    <location>
        <begin position="284"/>
        <end position="304"/>
    </location>
</feature>
<feature type="transmembrane region" description="Helical" evidence="3">
    <location>
        <begin position="657"/>
        <end position="677"/>
    </location>
</feature>
<feature type="transmembrane region" description="Helical" evidence="3">
    <location>
        <begin position="699"/>
        <end position="719"/>
    </location>
</feature>
<feature type="transmembrane region" description="Helical" evidence="3">
    <location>
        <begin position="780"/>
        <end position="800"/>
    </location>
</feature>
<feature type="transmembrane region" description="Helical" evidence="3">
    <location>
        <begin position="804"/>
        <end position="824"/>
    </location>
</feature>
<feature type="transmembrane region" description="Helical" evidence="3">
    <location>
        <begin position="880"/>
        <end position="900"/>
    </location>
</feature>
<feature type="transmembrane region" description="Helical" evidence="3">
    <location>
        <begin position="919"/>
        <end position="939"/>
    </location>
</feature>
<feature type="domain" description="ABC transmembrane type-1 1" evidence="3">
    <location>
        <begin position="23"/>
        <end position="312"/>
    </location>
</feature>
<feature type="domain" description="ABC transporter 1" evidence="2">
    <location>
        <begin position="347"/>
        <end position="583"/>
    </location>
</feature>
<feature type="domain" description="ABC transmembrane type-1 2" evidence="3">
    <location>
        <begin position="657"/>
        <end position="945"/>
    </location>
</feature>
<feature type="domain" description="ABC transporter 2" evidence="2">
    <location>
        <begin position="980"/>
        <end position="1218"/>
    </location>
</feature>
<feature type="binding site" evidence="2">
    <location>
        <begin position="382"/>
        <end position="389"/>
    </location>
    <ligand>
        <name>ATP</name>
        <dbReference type="ChEBI" id="CHEBI:30616"/>
        <label>1</label>
    </ligand>
</feature>
<feature type="binding site" evidence="2">
    <location>
        <begin position="1015"/>
        <end position="1022"/>
    </location>
    <ligand>
        <name>ATP</name>
        <dbReference type="ChEBI" id="CHEBI:30616"/>
        <label>2</label>
    </ligand>
</feature>
<feature type="glycosylation site" description="N-linked (GlcNAc...) asparagine" evidence="1">
    <location>
        <position position="530"/>
    </location>
</feature>
<feature type="glycosylation site" description="N-linked (GlcNAc...) asparagine" evidence="1">
    <location>
        <position position="754"/>
    </location>
</feature>
<feature type="glycosylation site" description="N-linked (GlcNAc...) asparagine" evidence="1">
    <location>
        <position position="960"/>
    </location>
</feature>
<feature type="glycosylation site" description="N-linked (GlcNAc...) asparagine" evidence="1">
    <location>
        <position position="1000"/>
    </location>
</feature>
<feature type="glycosylation site" description="N-linked (GlcNAc...) asparagine" evidence="1">
    <location>
        <position position="1201"/>
    </location>
</feature>
<keyword id="KW-0067">ATP-binding</keyword>
<keyword id="KW-0325">Glycoprotein</keyword>
<keyword id="KW-0472">Membrane</keyword>
<keyword id="KW-0547">Nucleotide-binding</keyword>
<keyword id="KW-1185">Reference proteome</keyword>
<keyword id="KW-0677">Repeat</keyword>
<keyword id="KW-0812">Transmembrane</keyword>
<keyword id="KW-1133">Transmembrane helix</keyword>
<keyword id="KW-0813">Transport</keyword>
<protein>
    <recommendedName>
        <fullName>ABC transporter B family member 18</fullName>
        <shortName>ABC transporter ABCB.18</shortName>
        <shortName>AtABCB18</shortName>
    </recommendedName>
    <alternativeName>
        <fullName>P-glycoprotein 18</fullName>
    </alternativeName>
    <alternativeName>
        <fullName>Putative multidrug resistance protein 20</fullName>
    </alternativeName>
</protein>
<name>AB18B_ARATH</name>
<comment type="subcellular location">
    <subcellularLocation>
        <location evidence="3">Membrane</location>
        <topology evidence="3">Multi-pass membrane protein</topology>
    </subcellularLocation>
</comment>
<comment type="similarity">
    <text evidence="4">Belongs to the ABC transporter superfamily. ABCB family. Multidrug resistance exporter (TC 3.A.1.201) subfamily.</text>
</comment>
<sequence>MMKSFGSIRSIFMHADGVDWMLMALGLIGAVGDGFITPIIFFICSKLLNNVGGSSFDDETFMQTVAKNAVALVYVACASWVICFIEGYCWTRTGERQAAKMREKYLKAVLRQDVGYFDLHVTSTSDVITSVSSDSLVIQDFLSEKLPNFLMNTSAFVASYIVGFLLLWRLTIVGFPFIILLLIPGLMYGRALIRISMKIREEYNEAGSIAEQVISSVRTVYAFGSEKKMIEKFSTALQGSVKLGLRQGLAKGIAIGSNGITYAIWGFLTWYGSRMVMNHGSKGGTVSSVIVCVTFGGTSLGQSLSNLKYFSEAFVVGERIMKVINRVPGIDSDNLEGQILEKTRGEVEFNHVKFTYPSRPETPIFDDLCLRVPSGKTVALVGGSGSGKSTVISLLQRFYDPIAGEILIDGLPINKLQVKWLRSQMGLVSQEPVLFATSIKENILFGKEDASMDEVVEAAKASNAHSFISQFPNSYQTQVGERGVQLSGGQKQRIAIARAIIKSPIILLLDEATSALDSESERVVQEALDNASIGRTTIVIAHRLSTIRNADVICVVHNGRIIETGSHEELLEKLDGQYTSLVRLQQVDNKESDHISVEEGQASSLSKDLKYSPKEFIHSTSSNIVRDFPNLSPKDGKSLVPSFKRLMSMNRPEWKHALYGCLGAALFGAVQPIYSYSSGSMVSVYFLASHDQIKEKTRIYVLLFVGLALFTFLSNISQHYGFAYMGEYLTKRIRERMLGKILTFEVNWFDKDENSSGAICSRLAKDANMVRSLVGDRMSLLVQTISAVSITCAIGLVISWRFSIVMMSVQPVIVVCFYTQRVLLKSMSRNAIKGQDESSKLAAEAVSNIRTITAFSSQERIINLLKMVQEGPRKDSARQSWLAGIMLGTSQSLITCVSALNFWYGGKLIADGKMMSKEFLEIFLIFASTGRVIAEAGTMTKDLVKGSDAVASVFAVLDRNTTIEPENPDGYVPKKVKGQISFSNVDFAYPTRPDVIIFQNFSIDIEDGKSTAIVGPSGSGKSTIISLIERFYDPLKGIVKIDGRDIRSCHLRSLRQHIALVSQEPTLFAGTIRENIMYGGASNKIDESEIIEAAKAANAHDFITSLSNGYDTCCGDRGVQLSGGQKQRIAIARAVLKNPSVLLLDEATSALDSQSESVVQDALERLMVGRTSVVIAHRLSTIQKCDTIAVLENGAVVECGNHSSLLAKGPKGAYFSLVSLQRTLF</sequence>
<gene>
    <name type="primary">ABCB18</name>
    <name type="synonym">MDR20</name>
    <name type="synonym">PGP18</name>
    <name type="ordered locus">At3g28390</name>
    <name type="ORF">MFJ20.7</name>
</gene>
<proteinExistence type="inferred from homology"/>
<organism>
    <name type="scientific">Arabidopsis thaliana</name>
    <name type="common">Mouse-ear cress</name>
    <dbReference type="NCBI Taxonomy" id="3702"/>
    <lineage>
        <taxon>Eukaryota</taxon>
        <taxon>Viridiplantae</taxon>
        <taxon>Streptophyta</taxon>
        <taxon>Embryophyta</taxon>
        <taxon>Tracheophyta</taxon>
        <taxon>Spermatophyta</taxon>
        <taxon>Magnoliopsida</taxon>
        <taxon>eudicotyledons</taxon>
        <taxon>Gunneridae</taxon>
        <taxon>Pentapetalae</taxon>
        <taxon>rosids</taxon>
        <taxon>malvids</taxon>
        <taxon>Brassicales</taxon>
        <taxon>Brassicaceae</taxon>
        <taxon>Camelineae</taxon>
        <taxon>Arabidopsis</taxon>
    </lineage>
</organism>
<accession>Q9LSJ5</accession>
<reference key="1">
    <citation type="journal article" date="2000" name="DNA Res.">
        <title>Structural analysis of Arabidopsis thaliana chromosome 3. I. Sequence features of the regions of 4,504,864 bp covered by sixty P1 and TAC clones.</title>
        <authorList>
            <person name="Sato S."/>
            <person name="Nakamura Y."/>
            <person name="Kaneko T."/>
            <person name="Katoh T."/>
            <person name="Asamizu E."/>
            <person name="Tabata S."/>
        </authorList>
    </citation>
    <scope>NUCLEOTIDE SEQUENCE [LARGE SCALE GENOMIC DNA]</scope>
    <source>
        <strain>cv. Columbia</strain>
    </source>
</reference>
<reference key="2">
    <citation type="journal article" date="2017" name="Plant J.">
        <title>Araport11: a complete reannotation of the Arabidopsis thaliana reference genome.</title>
        <authorList>
            <person name="Cheng C.Y."/>
            <person name="Krishnakumar V."/>
            <person name="Chan A.P."/>
            <person name="Thibaud-Nissen F."/>
            <person name="Schobel S."/>
            <person name="Town C.D."/>
        </authorList>
    </citation>
    <scope>GENOME REANNOTATION</scope>
    <source>
        <strain>cv. Columbia</strain>
    </source>
</reference>
<reference key="3">
    <citation type="journal article" date="2001" name="J. Biol. Chem.">
        <title>The Arabidopsis thaliana ABC protein superfamily, a complete inventory.</title>
        <authorList>
            <person name="Sanchez-Fernandez R."/>
            <person name="Davies T.G."/>
            <person name="Coleman J.O."/>
            <person name="Rea P.A."/>
        </authorList>
    </citation>
    <scope>GENE FAMILY</scope>
    <scope>NOMENCLATURE</scope>
</reference>
<reference key="4">
    <citation type="journal article" date="2008" name="Trends Plant Sci.">
        <title>Plant ABC proteins - a unified nomenclature and updated inventory.</title>
        <authorList>
            <person name="Verrier P.J."/>
            <person name="Bird D."/>
            <person name="Burla B."/>
            <person name="Dassa E."/>
            <person name="Forestier C."/>
            <person name="Geisler M."/>
            <person name="Klein M."/>
            <person name="Kolukisaoglu H.U."/>
            <person name="Lee Y."/>
            <person name="Martinoia E."/>
            <person name="Murphy A."/>
            <person name="Rea P.A."/>
            <person name="Samuels L."/>
            <person name="Schulz B."/>
            <person name="Spalding E.J."/>
            <person name="Yazaki K."/>
            <person name="Theodoulou F.L."/>
        </authorList>
    </citation>
    <scope>GENE FAMILY</scope>
    <scope>NOMENCLATURE</scope>
</reference>
<dbReference type="EMBL" id="AB026644">
    <property type="protein sequence ID" value="BAB02855.1"/>
    <property type="molecule type" value="Genomic_DNA"/>
</dbReference>
<dbReference type="EMBL" id="CP002686">
    <property type="protein sequence ID" value="AEE77440.1"/>
    <property type="molecule type" value="Genomic_DNA"/>
</dbReference>
<dbReference type="RefSeq" id="NP_189480.1">
    <property type="nucleotide sequence ID" value="NM_113759.1"/>
</dbReference>
<dbReference type="SMR" id="Q9LSJ5"/>
<dbReference type="BioGRID" id="7797">
    <property type="interactions" value="1"/>
</dbReference>
<dbReference type="FunCoup" id="Q9LSJ5">
    <property type="interactions" value="111"/>
</dbReference>
<dbReference type="STRING" id="3702.Q9LSJ5"/>
<dbReference type="GlyCosmos" id="Q9LSJ5">
    <property type="glycosylation" value="5 sites, No reported glycans"/>
</dbReference>
<dbReference type="GlyGen" id="Q9LSJ5">
    <property type="glycosylation" value="5 sites"/>
</dbReference>
<dbReference type="PaxDb" id="3702-AT3G28390.1"/>
<dbReference type="EnsemblPlants" id="AT3G28390.1">
    <property type="protein sequence ID" value="AT3G28390.1"/>
    <property type="gene ID" value="AT3G28390"/>
</dbReference>
<dbReference type="GeneID" id="822468"/>
<dbReference type="Gramene" id="AT3G28390.1">
    <property type="protein sequence ID" value="AT3G28390.1"/>
    <property type="gene ID" value="AT3G28390"/>
</dbReference>
<dbReference type="KEGG" id="ath:AT3G28390"/>
<dbReference type="Araport" id="AT3G28390"/>
<dbReference type="TAIR" id="AT3G28390">
    <property type="gene designation" value="ABCB18"/>
</dbReference>
<dbReference type="eggNOG" id="KOG0055">
    <property type="taxonomic scope" value="Eukaryota"/>
</dbReference>
<dbReference type="HOGENOM" id="CLU_000604_17_2_1"/>
<dbReference type="InParanoid" id="Q9LSJ5"/>
<dbReference type="OMA" id="IVMMAAQ"/>
<dbReference type="PhylomeDB" id="Q9LSJ5"/>
<dbReference type="BioCyc" id="ARA:AT3G28390-MONOMER"/>
<dbReference type="PRO" id="PR:Q9LSJ5"/>
<dbReference type="Proteomes" id="UP000006548">
    <property type="component" value="Chromosome 3"/>
</dbReference>
<dbReference type="ExpressionAtlas" id="Q9LSJ5">
    <property type="expression patterns" value="differential"/>
</dbReference>
<dbReference type="GO" id="GO:0016020">
    <property type="term" value="C:membrane"/>
    <property type="evidence" value="ECO:0007669"/>
    <property type="project" value="UniProtKB-SubCell"/>
</dbReference>
<dbReference type="GO" id="GO:0140359">
    <property type="term" value="F:ABC-type transporter activity"/>
    <property type="evidence" value="ECO:0007669"/>
    <property type="project" value="InterPro"/>
</dbReference>
<dbReference type="GO" id="GO:0005524">
    <property type="term" value="F:ATP binding"/>
    <property type="evidence" value="ECO:0007669"/>
    <property type="project" value="UniProtKB-KW"/>
</dbReference>
<dbReference type="GO" id="GO:0016887">
    <property type="term" value="F:ATP hydrolysis activity"/>
    <property type="evidence" value="ECO:0007669"/>
    <property type="project" value="InterPro"/>
</dbReference>
<dbReference type="CDD" id="cd18577">
    <property type="entry name" value="ABC_6TM_Pgp_ABCB1_D1_like"/>
    <property type="match status" value="1"/>
</dbReference>
<dbReference type="CDD" id="cd18578">
    <property type="entry name" value="ABC_6TM_Pgp_ABCB1_D2_like"/>
    <property type="match status" value="1"/>
</dbReference>
<dbReference type="CDD" id="cd03249">
    <property type="entry name" value="ABC_MTABC3_MDL1_MDL2"/>
    <property type="match status" value="2"/>
</dbReference>
<dbReference type="FunFam" id="1.20.1560.10:FF:000029">
    <property type="entry name" value="ABC transporter B family member 1"/>
    <property type="match status" value="1"/>
</dbReference>
<dbReference type="FunFam" id="3.40.50.300:FF:000205">
    <property type="entry name" value="ABC transporter B family member 4"/>
    <property type="match status" value="2"/>
</dbReference>
<dbReference type="FunFam" id="1.20.1560.10:FF:000126">
    <property type="entry name" value="Putative ABC transporter B family member 8"/>
    <property type="match status" value="1"/>
</dbReference>
<dbReference type="Gene3D" id="1.20.1560.10">
    <property type="entry name" value="ABC transporter type 1, transmembrane domain"/>
    <property type="match status" value="1"/>
</dbReference>
<dbReference type="Gene3D" id="3.40.50.300">
    <property type="entry name" value="P-loop containing nucleotide triphosphate hydrolases"/>
    <property type="match status" value="2"/>
</dbReference>
<dbReference type="InterPro" id="IPR003593">
    <property type="entry name" value="AAA+_ATPase"/>
</dbReference>
<dbReference type="InterPro" id="IPR011527">
    <property type="entry name" value="ABC1_TM_dom"/>
</dbReference>
<dbReference type="InterPro" id="IPR036640">
    <property type="entry name" value="ABC1_TM_sf"/>
</dbReference>
<dbReference type="InterPro" id="IPR003439">
    <property type="entry name" value="ABC_transporter-like_ATP-bd"/>
</dbReference>
<dbReference type="InterPro" id="IPR017871">
    <property type="entry name" value="ABC_transporter-like_CS"/>
</dbReference>
<dbReference type="InterPro" id="IPR027417">
    <property type="entry name" value="P-loop_NTPase"/>
</dbReference>
<dbReference type="PANTHER" id="PTHR45136">
    <property type="entry name" value="ABC TRANSPORTER DOMAIN-CONTAINING PROTEIN"/>
    <property type="match status" value="1"/>
</dbReference>
<dbReference type="PANTHER" id="PTHR45136:SF2">
    <property type="entry name" value="ABC TRANSPORTER DOMAIN-CONTAINING PROTEIN"/>
    <property type="match status" value="1"/>
</dbReference>
<dbReference type="Pfam" id="PF00664">
    <property type="entry name" value="ABC_membrane"/>
    <property type="match status" value="2"/>
</dbReference>
<dbReference type="Pfam" id="PF00005">
    <property type="entry name" value="ABC_tran"/>
    <property type="match status" value="2"/>
</dbReference>
<dbReference type="SMART" id="SM00382">
    <property type="entry name" value="AAA"/>
    <property type="match status" value="2"/>
</dbReference>
<dbReference type="SUPFAM" id="SSF90123">
    <property type="entry name" value="ABC transporter transmembrane region"/>
    <property type="match status" value="2"/>
</dbReference>
<dbReference type="SUPFAM" id="SSF52540">
    <property type="entry name" value="P-loop containing nucleoside triphosphate hydrolases"/>
    <property type="match status" value="2"/>
</dbReference>
<dbReference type="PROSITE" id="PS50929">
    <property type="entry name" value="ABC_TM1F"/>
    <property type="match status" value="2"/>
</dbReference>
<dbReference type="PROSITE" id="PS00211">
    <property type="entry name" value="ABC_TRANSPORTER_1"/>
    <property type="match status" value="2"/>
</dbReference>
<dbReference type="PROSITE" id="PS50893">
    <property type="entry name" value="ABC_TRANSPORTER_2"/>
    <property type="match status" value="2"/>
</dbReference>